<reference key="1">
    <citation type="journal article" date="1996" name="Mol. Biol. Evol.">
        <title>Length variation and secondary structure of introns in the Mlc1 gene in six species of Drosophila.</title>
        <authorList>
            <person name="Clark A.G."/>
            <person name="Leicht B.G."/>
            <person name="Muse S.V."/>
        </authorList>
    </citation>
    <scope>NUCLEOTIDE SEQUENCE [GENOMIC DNA]</scope>
    <scope>ALTERNATIVE SPLICING</scope>
</reference>
<keyword id="KW-0025">Alternative splicing</keyword>
<keyword id="KW-0505">Motor protein</keyword>
<keyword id="KW-0514">Muscle protein</keyword>
<keyword id="KW-0518">Myosin</keyword>
<keyword id="KW-0677">Repeat</keyword>
<accession>Q24766</accession>
<accession>Q24765</accession>
<gene>
    <name type="primary">Mlc1</name>
</gene>
<evidence type="ECO:0000255" key="1">
    <source>
        <dbReference type="PROSITE-ProRule" id="PRU00448"/>
    </source>
</evidence>
<evidence type="ECO:0000305" key="2"/>
<comment type="subunit">
    <text>Myosin is a hexamer of 2 heavy chains and 4 light chains.</text>
</comment>
<comment type="alternative products">
    <event type="alternative splicing"/>
    <isoform>
        <id>Q24766-1</id>
        <name>Larval-adult</name>
        <name>Larval-non-IFM</name>
        <sequence type="displayed"/>
    </isoform>
    <isoform>
        <id>Q24766-2</id>
        <name>Indirect flight muscle</name>
        <name>Pupa</name>
        <name>Adult flight muscle</name>
        <sequence type="described" ref="VSP_003373"/>
    </isoform>
</comment>
<proteinExistence type="predicted"/>
<protein>
    <recommendedName>
        <fullName>Myosin light chain alkali</fullName>
    </recommendedName>
</protein>
<name>MLC1_DROYA</name>
<dbReference type="EMBL" id="L49007">
    <property type="protein sequence ID" value="AAC37270.1"/>
    <property type="molecule type" value="Genomic_DNA"/>
</dbReference>
<dbReference type="EMBL" id="L49007">
    <property type="protein sequence ID" value="AAC37271.1"/>
    <property type="molecule type" value="Genomic_DNA"/>
</dbReference>
<dbReference type="SMR" id="Q24766"/>
<dbReference type="EnsemblMetazoa" id="FBtr0257067">
    <property type="protein sequence ID" value="FBpp0255559"/>
    <property type="gene ID" value="FBgn0015215"/>
</dbReference>
<dbReference type="EnsemblMetazoa" id="XM_002098732.3">
    <property type="protein sequence ID" value="XP_002098768.1"/>
    <property type="gene ID" value="LOC6538241"/>
</dbReference>
<dbReference type="eggNOG" id="KOG0030">
    <property type="taxonomic scope" value="Eukaryota"/>
</dbReference>
<dbReference type="OrthoDB" id="26525at2759"/>
<dbReference type="ChiTaRS" id="Mlc1">
    <property type="organism name" value="fly"/>
</dbReference>
<dbReference type="GO" id="GO:0005859">
    <property type="term" value="C:muscle myosin complex"/>
    <property type="evidence" value="ECO:0000250"/>
    <property type="project" value="UniProtKB"/>
</dbReference>
<dbReference type="GO" id="GO:0005509">
    <property type="term" value="F:calcium ion binding"/>
    <property type="evidence" value="ECO:0007669"/>
    <property type="project" value="InterPro"/>
</dbReference>
<dbReference type="GO" id="GO:0007498">
    <property type="term" value="P:mesoderm development"/>
    <property type="evidence" value="ECO:0007669"/>
    <property type="project" value="EnsemblMetazoa"/>
</dbReference>
<dbReference type="FunFam" id="1.10.238.10:FF:000267">
    <property type="entry name" value="Myosin light chain alkali"/>
    <property type="match status" value="1"/>
</dbReference>
<dbReference type="Gene3D" id="1.10.238.10">
    <property type="entry name" value="EF-hand"/>
    <property type="match status" value="1"/>
</dbReference>
<dbReference type="InterPro" id="IPR050230">
    <property type="entry name" value="CALM/Myosin/TropC-like"/>
</dbReference>
<dbReference type="InterPro" id="IPR011992">
    <property type="entry name" value="EF-hand-dom_pair"/>
</dbReference>
<dbReference type="InterPro" id="IPR002048">
    <property type="entry name" value="EF_hand_dom"/>
</dbReference>
<dbReference type="PANTHER" id="PTHR23048">
    <property type="entry name" value="MYOSIN LIGHT CHAIN 1, 3"/>
    <property type="match status" value="1"/>
</dbReference>
<dbReference type="PANTHER" id="PTHR23048:SF33">
    <property type="entry name" value="MYOSIN LIGHT CHAIN ALKALI"/>
    <property type="match status" value="1"/>
</dbReference>
<dbReference type="Pfam" id="PF13499">
    <property type="entry name" value="EF-hand_7"/>
    <property type="match status" value="1"/>
</dbReference>
<dbReference type="SUPFAM" id="SSF47473">
    <property type="entry name" value="EF-hand"/>
    <property type="match status" value="1"/>
</dbReference>
<dbReference type="PROSITE" id="PS50222">
    <property type="entry name" value="EF_HAND_2"/>
    <property type="match status" value="1"/>
</dbReference>
<feature type="chain" id="PRO_0000198716" description="Myosin light chain alkali">
    <location>
        <begin position="1" status="less than"/>
        <end position="82"/>
    </location>
</feature>
<feature type="domain" description="EF-hand" evidence="1">
    <location>
        <begin position="7"/>
        <end position="42"/>
    </location>
</feature>
<feature type="splice variant" id="VSP_003373" description="In isoform Indirect flight muscle." evidence="2">
    <original>QFVQRLMSDPVVFD</original>
    <variation>PFLARMCDRPDQLK</variation>
    <location>
        <begin position="69"/>
        <end position="82"/>
    </location>
</feature>
<feature type="non-terminal residue">
    <location>
        <position position="1"/>
    </location>
</feature>
<organism>
    <name type="scientific">Drosophila yakuba</name>
    <name type="common">Fruit fly</name>
    <dbReference type="NCBI Taxonomy" id="7245"/>
    <lineage>
        <taxon>Eukaryota</taxon>
        <taxon>Metazoa</taxon>
        <taxon>Ecdysozoa</taxon>
        <taxon>Arthropoda</taxon>
        <taxon>Hexapoda</taxon>
        <taxon>Insecta</taxon>
        <taxon>Pterygota</taxon>
        <taxon>Neoptera</taxon>
        <taxon>Endopterygota</taxon>
        <taxon>Diptera</taxon>
        <taxon>Brachycera</taxon>
        <taxon>Muscomorpha</taxon>
        <taxon>Ephydroidea</taxon>
        <taxon>Drosophilidae</taxon>
        <taxon>Drosophila</taxon>
        <taxon>Sophophora</taxon>
    </lineage>
</organism>
<sequence length="82" mass="9498">KKEKEQGCYEDFIECLKLYDKEENGTMLLAELQHALLALGENLDDEQVETLFADCMDPEDDEGFIPYSQFVQRLMSDPVVFD</sequence>